<sequence>MLKREGKVQPYTKTLDGGWGWMIVIHFFLVNVFVMGMTKTFAIFFVVFQEEFEGTSEQIGWIGSIMSSLRFCAGPLVAIICDILGEKTTSILGAFVVTGGYLISSWATSIPFLCVTMGLLPGLGSAFLYQVAAVVTTKYFKKRLALSTAIARSGMGLTFLLAPFTKFLIDLYDWTGALILFGAIALNLVPSSMLLRPIHIKSENNSGIKDKGSSLSAHGPEAHATETHCHETEESTIKDSTTQKAGLPSKNLTVSQNQSEEFYNGPNRNRLLLKSDEESDKVISWSCKQLFDISLFRNPFFYIFTWSFLLSQLAYFIPTFHLVARAKTLGIDIMDASYLVSVAGILETVSQIISGWVADQNWIKKYHYHKSYLILCGITNLLAPLATTFPLLMTYTICFAIFAGGYLALILPVLVDLCRNSTVNRFLGLASFFAGMAVLSGPPIAGWLYDYTQTYNGSFYFSGICYLLSSVSFFFVPLAERWKNSLT</sequence>
<protein>
    <recommendedName>
        <fullName>Monocarboxylate transporter 5</fullName>
        <shortName>MCT 5</shortName>
    </recommendedName>
    <alternativeName>
        <fullName>Monocarboxylate transporter 4</fullName>
        <shortName>MCT 4</shortName>
    </alternativeName>
    <alternativeName>
        <fullName>Solute carrier family 16 member 4</fullName>
    </alternativeName>
</protein>
<organism>
    <name type="scientific">Homo sapiens</name>
    <name type="common">Human</name>
    <dbReference type="NCBI Taxonomy" id="9606"/>
    <lineage>
        <taxon>Eukaryota</taxon>
        <taxon>Metazoa</taxon>
        <taxon>Chordata</taxon>
        <taxon>Craniata</taxon>
        <taxon>Vertebrata</taxon>
        <taxon>Euteleostomi</taxon>
        <taxon>Mammalia</taxon>
        <taxon>Eutheria</taxon>
        <taxon>Euarchontoglires</taxon>
        <taxon>Primates</taxon>
        <taxon>Haplorrhini</taxon>
        <taxon>Catarrhini</taxon>
        <taxon>Hominidae</taxon>
        <taxon>Homo</taxon>
    </lineage>
</organism>
<dbReference type="EMBL" id="U59185">
    <property type="protein sequence ID" value="AAB72035.1"/>
    <property type="molecule type" value="mRNA"/>
</dbReference>
<dbReference type="EMBL" id="AK290720">
    <property type="protein sequence ID" value="BAF83409.1"/>
    <property type="molecule type" value="mRNA"/>
</dbReference>
<dbReference type="EMBL" id="AK295946">
    <property type="protein sequence ID" value="BAG58729.1"/>
    <property type="molecule type" value="mRNA"/>
</dbReference>
<dbReference type="EMBL" id="AK298539">
    <property type="protein sequence ID" value="BAG60739.1"/>
    <property type="molecule type" value="mRNA"/>
</dbReference>
<dbReference type="EMBL" id="AK313735">
    <property type="protein sequence ID" value="BAG36476.1"/>
    <property type="molecule type" value="mRNA"/>
</dbReference>
<dbReference type="EMBL" id="AL355488">
    <property type="status" value="NOT_ANNOTATED_CDS"/>
    <property type="molecule type" value="Genomic_DNA"/>
</dbReference>
<dbReference type="EMBL" id="CH471122">
    <property type="protein sequence ID" value="EAW56443.1"/>
    <property type="molecule type" value="Genomic_DNA"/>
</dbReference>
<dbReference type="EMBL" id="CH471122">
    <property type="protein sequence ID" value="EAW56445.1"/>
    <property type="molecule type" value="Genomic_DNA"/>
</dbReference>
<dbReference type="EMBL" id="CH471122">
    <property type="protein sequence ID" value="EAW56446.1"/>
    <property type="molecule type" value="Genomic_DNA"/>
</dbReference>
<dbReference type="EMBL" id="BC021664">
    <property type="protein sequence ID" value="AAH21664.1"/>
    <property type="molecule type" value="mRNA"/>
</dbReference>
<dbReference type="CCDS" id="CCDS55621.1">
    <molecule id="O15374-4"/>
</dbReference>
<dbReference type="CCDS" id="CCDS55622.1">
    <molecule id="O15374-2"/>
</dbReference>
<dbReference type="CCDS" id="CCDS55623.1">
    <molecule id="O15374-5"/>
</dbReference>
<dbReference type="CCDS" id="CCDS55624.1">
    <molecule id="O15374-3"/>
</dbReference>
<dbReference type="CCDS" id="CCDS823.1">
    <molecule id="O15374-1"/>
</dbReference>
<dbReference type="RefSeq" id="NP_001188475.1">
    <molecule id="O15374-5"/>
    <property type="nucleotide sequence ID" value="NM_001201546.2"/>
</dbReference>
<dbReference type="RefSeq" id="NP_001188476.1">
    <molecule id="O15374-2"/>
    <property type="nucleotide sequence ID" value="NM_001201547.2"/>
</dbReference>
<dbReference type="RefSeq" id="NP_001188477.1">
    <molecule id="O15374-4"/>
    <property type="nucleotide sequence ID" value="NM_001201548.2"/>
</dbReference>
<dbReference type="RefSeq" id="NP_001188478.1">
    <molecule id="O15374-3"/>
    <property type="nucleotide sequence ID" value="NM_001201549.2"/>
</dbReference>
<dbReference type="RefSeq" id="NP_004687.1">
    <molecule id="O15374-1"/>
    <property type="nucleotide sequence ID" value="NM_004696.3"/>
</dbReference>
<dbReference type="RefSeq" id="XP_005271374.1">
    <molecule id="O15374-1"/>
    <property type="nucleotide sequence ID" value="XM_005271317.6"/>
</dbReference>
<dbReference type="RefSeq" id="XP_047289923.1">
    <molecule id="O15374-2"/>
    <property type="nucleotide sequence ID" value="XM_047433967.1"/>
</dbReference>
<dbReference type="RefSeq" id="XP_047289936.1">
    <molecule id="O15374-3"/>
    <property type="nucleotide sequence ID" value="XM_047433980.1"/>
</dbReference>
<dbReference type="RefSeq" id="XP_054195529.1">
    <molecule id="O15374-1"/>
    <property type="nucleotide sequence ID" value="XM_054339554.1"/>
</dbReference>
<dbReference type="RefSeq" id="XP_054195530.1">
    <molecule id="O15374-2"/>
    <property type="nucleotide sequence ID" value="XM_054339555.1"/>
</dbReference>
<dbReference type="RefSeq" id="XP_054195532.1">
    <molecule id="O15374-3"/>
    <property type="nucleotide sequence ID" value="XM_054339557.1"/>
</dbReference>
<dbReference type="SMR" id="O15374"/>
<dbReference type="BioGRID" id="114570">
    <property type="interactions" value="13"/>
</dbReference>
<dbReference type="FunCoup" id="O15374">
    <property type="interactions" value="114"/>
</dbReference>
<dbReference type="IntAct" id="O15374">
    <property type="interactions" value="5"/>
</dbReference>
<dbReference type="MINT" id="O15374"/>
<dbReference type="STRING" id="9606.ENSP00000358794"/>
<dbReference type="DrugBank" id="DB00119">
    <property type="generic name" value="Pyruvic acid"/>
</dbReference>
<dbReference type="TCDB" id="2.A.1.13.7">
    <property type="family name" value="the major facilitator superfamily (mfs)"/>
</dbReference>
<dbReference type="iPTMnet" id="O15374"/>
<dbReference type="PhosphoSitePlus" id="O15374"/>
<dbReference type="BioMuta" id="SLC16A4"/>
<dbReference type="jPOST" id="O15374"/>
<dbReference type="MassIVE" id="O15374"/>
<dbReference type="PaxDb" id="9606-ENSP00000358794"/>
<dbReference type="PeptideAtlas" id="O15374"/>
<dbReference type="ProteomicsDB" id="17467"/>
<dbReference type="ProteomicsDB" id="32280"/>
<dbReference type="ProteomicsDB" id="4352"/>
<dbReference type="ProteomicsDB" id="48616">
    <molecule id="O15374-1"/>
</dbReference>
<dbReference type="ProteomicsDB" id="74621"/>
<dbReference type="Antibodypedia" id="20096">
    <property type="antibodies" value="117 antibodies from 24 providers"/>
</dbReference>
<dbReference type="DNASU" id="9122"/>
<dbReference type="Ensembl" id="ENST00000369779.9">
    <molecule id="O15374-1"/>
    <property type="protein sequence ID" value="ENSP00000358794.4"/>
    <property type="gene ID" value="ENSG00000168679.18"/>
</dbReference>
<dbReference type="Ensembl" id="ENST00000369781.8">
    <molecule id="O15374-3"/>
    <property type="protein sequence ID" value="ENSP00000358796.4"/>
    <property type="gene ID" value="ENSG00000168679.18"/>
</dbReference>
<dbReference type="Ensembl" id="ENST00000437429.6">
    <molecule id="O15374-4"/>
    <property type="protein sequence ID" value="ENSP00000394790.2"/>
    <property type="gene ID" value="ENSG00000168679.18"/>
</dbReference>
<dbReference type="Ensembl" id="ENST00000472422.6">
    <molecule id="O15374-5"/>
    <property type="protein sequence ID" value="ENSP00000432495.1"/>
    <property type="gene ID" value="ENSG00000168679.18"/>
</dbReference>
<dbReference type="Ensembl" id="ENST00000541986.5">
    <molecule id="O15374-2"/>
    <property type="protein sequence ID" value="ENSP00000446087.1"/>
    <property type="gene ID" value="ENSG00000168679.18"/>
</dbReference>
<dbReference type="GeneID" id="9122"/>
<dbReference type="KEGG" id="hsa:9122"/>
<dbReference type="MANE-Select" id="ENST00000369779.9">
    <property type="protein sequence ID" value="ENSP00000358794.4"/>
    <property type="RefSeq nucleotide sequence ID" value="NM_004696.3"/>
    <property type="RefSeq protein sequence ID" value="NP_004687.1"/>
</dbReference>
<dbReference type="UCSC" id="uc001dzo.3">
    <molecule id="O15374-1"/>
    <property type="organism name" value="human"/>
</dbReference>
<dbReference type="AGR" id="HGNC:10925"/>
<dbReference type="CTD" id="9122"/>
<dbReference type="DisGeNET" id="9122"/>
<dbReference type="GeneCards" id="SLC16A4"/>
<dbReference type="HGNC" id="HGNC:10925">
    <property type="gene designation" value="SLC16A4"/>
</dbReference>
<dbReference type="HPA" id="ENSG00000168679">
    <property type="expression patterns" value="Tissue enriched (kidney)"/>
</dbReference>
<dbReference type="MIM" id="603878">
    <property type="type" value="gene"/>
</dbReference>
<dbReference type="neXtProt" id="NX_O15374"/>
<dbReference type="OpenTargets" id="ENSG00000168679"/>
<dbReference type="PharmGKB" id="PA35816"/>
<dbReference type="VEuPathDB" id="HostDB:ENSG00000168679"/>
<dbReference type="eggNOG" id="KOG2504">
    <property type="taxonomic scope" value="Eukaryota"/>
</dbReference>
<dbReference type="GeneTree" id="ENSGT00940000158411"/>
<dbReference type="HOGENOM" id="CLU_001265_59_2_1"/>
<dbReference type="InParanoid" id="O15374"/>
<dbReference type="OMA" id="YQAFSVV"/>
<dbReference type="OrthoDB" id="2213137at2759"/>
<dbReference type="PAN-GO" id="O15374">
    <property type="GO annotations" value="3 GO annotations based on evolutionary models"/>
</dbReference>
<dbReference type="PhylomeDB" id="O15374"/>
<dbReference type="TreeFam" id="TF313792"/>
<dbReference type="PathwayCommons" id="O15374"/>
<dbReference type="SignaLink" id="O15374"/>
<dbReference type="SIGNOR" id="O15374"/>
<dbReference type="BioGRID-ORCS" id="9122">
    <property type="hits" value="6 hits in 1156 CRISPR screens"/>
</dbReference>
<dbReference type="ChiTaRS" id="SLC16A4">
    <property type="organism name" value="human"/>
</dbReference>
<dbReference type="GeneWiki" id="SLC16A4"/>
<dbReference type="GenomeRNAi" id="9122"/>
<dbReference type="Pharos" id="O15374">
    <property type="development level" value="Tbio"/>
</dbReference>
<dbReference type="PRO" id="PR:O15374"/>
<dbReference type="Proteomes" id="UP000005640">
    <property type="component" value="Chromosome 1"/>
</dbReference>
<dbReference type="RNAct" id="O15374">
    <property type="molecule type" value="protein"/>
</dbReference>
<dbReference type="Bgee" id="ENSG00000168679">
    <property type="expression patterns" value="Expressed in palpebral conjunctiva and 146 other cell types or tissues"/>
</dbReference>
<dbReference type="ExpressionAtlas" id="O15374">
    <property type="expression patterns" value="baseline and differential"/>
</dbReference>
<dbReference type="GO" id="GO:0016020">
    <property type="term" value="C:membrane"/>
    <property type="evidence" value="ECO:0000304"/>
    <property type="project" value="ProtInc"/>
</dbReference>
<dbReference type="GO" id="GO:0005886">
    <property type="term" value="C:plasma membrane"/>
    <property type="evidence" value="ECO:0000318"/>
    <property type="project" value="GO_Central"/>
</dbReference>
<dbReference type="GO" id="GO:0008028">
    <property type="term" value="F:monocarboxylic acid transmembrane transporter activity"/>
    <property type="evidence" value="ECO:0000318"/>
    <property type="project" value="GO_Central"/>
</dbReference>
<dbReference type="GO" id="GO:0015293">
    <property type="term" value="F:symporter activity"/>
    <property type="evidence" value="ECO:0007669"/>
    <property type="project" value="UniProtKB-KW"/>
</dbReference>
<dbReference type="GO" id="GO:1905039">
    <property type="term" value="P:carboxylic acid transmembrane transport"/>
    <property type="evidence" value="ECO:0000318"/>
    <property type="project" value="GO_Central"/>
</dbReference>
<dbReference type="GO" id="GO:0015718">
    <property type="term" value="P:monocarboxylic acid transport"/>
    <property type="evidence" value="ECO:0000304"/>
    <property type="project" value="ProtInc"/>
</dbReference>
<dbReference type="CDD" id="cd17421">
    <property type="entry name" value="MFS_MCT5"/>
    <property type="match status" value="1"/>
</dbReference>
<dbReference type="FunFam" id="1.20.1250.20:FF:000141">
    <property type="entry name" value="Solute carrier family 16, member 4"/>
    <property type="match status" value="1"/>
</dbReference>
<dbReference type="FunFam" id="1.20.1250.20:FF:000944">
    <property type="entry name" value="Solute carrier family 16, member 4"/>
    <property type="match status" value="1"/>
</dbReference>
<dbReference type="Gene3D" id="1.20.1250.20">
    <property type="entry name" value="MFS general substrate transporter like domains"/>
    <property type="match status" value="2"/>
</dbReference>
<dbReference type="InterPro" id="IPR011701">
    <property type="entry name" value="MFS"/>
</dbReference>
<dbReference type="InterPro" id="IPR020846">
    <property type="entry name" value="MFS_dom"/>
</dbReference>
<dbReference type="InterPro" id="IPR036259">
    <property type="entry name" value="MFS_trans_sf"/>
</dbReference>
<dbReference type="InterPro" id="IPR050327">
    <property type="entry name" value="Proton-linked_MCT"/>
</dbReference>
<dbReference type="PANTHER" id="PTHR11360">
    <property type="entry name" value="MONOCARBOXYLATE TRANSPORTER"/>
    <property type="match status" value="1"/>
</dbReference>
<dbReference type="PANTHER" id="PTHR11360:SF14">
    <property type="entry name" value="MONOCARBOXYLATE TRANSPORTER 5"/>
    <property type="match status" value="1"/>
</dbReference>
<dbReference type="Pfam" id="PF07690">
    <property type="entry name" value="MFS_1"/>
    <property type="match status" value="1"/>
</dbReference>
<dbReference type="SUPFAM" id="SSF103473">
    <property type="entry name" value="MFS general substrate transporter"/>
    <property type="match status" value="1"/>
</dbReference>
<dbReference type="PROSITE" id="PS50850">
    <property type="entry name" value="MFS"/>
    <property type="match status" value="1"/>
</dbReference>
<accession>O15374</accession>
<accession>A8K3V5</accession>
<accession>B2R9C9</accession>
<accession>B4DJ67</accession>
<accession>B4DPX7</accession>
<accession>E7EPY8</accession>
<accession>G3V175</accession>
<accession>Q5T612</accession>
<accession>Q8WU09</accession>
<evidence type="ECO:0000250" key="1"/>
<evidence type="ECO:0000255" key="2"/>
<evidence type="ECO:0000256" key="3">
    <source>
        <dbReference type="SAM" id="MobiDB-lite"/>
    </source>
</evidence>
<evidence type="ECO:0000269" key="4">
    <source>
    </source>
</evidence>
<evidence type="ECO:0000303" key="5">
    <source>
    </source>
</evidence>
<evidence type="ECO:0000303" key="6">
    <source>
    </source>
</evidence>
<evidence type="ECO:0000305" key="7"/>
<keyword id="KW-0025">Alternative splicing</keyword>
<keyword id="KW-1003">Cell membrane</keyword>
<keyword id="KW-0472">Membrane</keyword>
<keyword id="KW-1267">Proteomics identification</keyword>
<keyword id="KW-1185">Reference proteome</keyword>
<keyword id="KW-0769">Symport</keyword>
<keyword id="KW-0812">Transmembrane</keyword>
<keyword id="KW-1133">Transmembrane helix</keyword>
<keyword id="KW-0813">Transport</keyword>
<proteinExistence type="evidence at protein level"/>
<comment type="function">
    <text evidence="1">Proton-linked monocarboxylate transporter. Catalyzes the rapid transport across the plasma membrane of many monocarboxylates such as lactate, pyruvate, branched-chain oxo acids derived from leucine, valine and isoleucine, and the ketone bodies acetoacetate, beta-hydroxybutyrate and acetate (By similarity).</text>
</comment>
<comment type="interaction">
    <interactant intactId="EBI-12889748">
        <id>O15374-3</id>
    </interactant>
    <interactant intactId="EBI-11337973">
        <id>Q9BRK0</id>
        <label>REEP2</label>
    </interactant>
    <organismsDiffer>false</organismsDiffer>
    <experiments>3</experiments>
</comment>
<comment type="interaction">
    <interactant intactId="EBI-12889748">
        <id>O15374-3</id>
    </interactant>
    <interactant intactId="EBI-10982110">
        <id>Q96Q45-2</id>
        <label>TMEM237</label>
    </interactant>
    <organismsDiffer>false</organismsDiffer>
    <experiments>3</experiments>
</comment>
<comment type="subcellular location">
    <subcellularLocation>
        <location>Cell membrane</location>
        <topology>Multi-pass membrane protein</topology>
    </subcellularLocation>
</comment>
<comment type="alternative products">
    <event type="alternative splicing"/>
    <isoform>
        <id>O15374-1</id>
        <name>1</name>
        <sequence type="displayed"/>
    </isoform>
    <isoform>
        <id>O15374-2</id>
        <name>2</name>
        <sequence type="described" ref="VSP_046242 VSP_046243"/>
    </isoform>
    <isoform>
        <id>O15374-3</id>
        <name>3</name>
        <sequence type="described" ref="VSP_046244"/>
    </isoform>
    <isoform>
        <id>O15374-4</id>
        <name>4</name>
        <sequence type="described" ref="VSP_046456 VSP_046458"/>
    </isoform>
    <isoform>
        <id>O15374-5</id>
        <name>5</name>
        <sequence type="described" ref="VSP_046457"/>
    </isoform>
</comment>
<comment type="similarity">
    <text evidence="7">Belongs to the major facilitator superfamily. Monocarboxylate porter (TC 2.A.1.13) family.</text>
</comment>
<feature type="chain" id="PRO_0000211398" description="Monocarboxylate transporter 5">
    <location>
        <begin position="1"/>
        <end position="487"/>
    </location>
</feature>
<feature type="topological domain" description="Cytoplasmic" evidence="2">
    <location>
        <begin position="1"/>
        <end position="16"/>
    </location>
</feature>
<feature type="transmembrane region" description="Helical" evidence="2">
    <location>
        <begin position="17"/>
        <end position="37"/>
    </location>
</feature>
<feature type="topological domain" description="Extracellular" evidence="2">
    <location>
        <begin position="38"/>
        <end position="59"/>
    </location>
</feature>
<feature type="transmembrane region" description="Helical" evidence="2">
    <location>
        <begin position="60"/>
        <end position="80"/>
    </location>
</feature>
<feature type="topological domain" description="Cytoplasmic" evidence="2">
    <location>
        <begin position="81"/>
        <end position="87"/>
    </location>
</feature>
<feature type="transmembrane region" description="Helical" evidence="2">
    <location>
        <begin position="88"/>
        <end position="108"/>
    </location>
</feature>
<feature type="topological domain" description="Extracellular" evidence="2">
    <location>
        <position position="109"/>
    </location>
</feature>
<feature type="transmembrane region" description="Helical" evidence="2">
    <location>
        <begin position="110"/>
        <end position="129"/>
    </location>
</feature>
<feature type="topological domain" description="Cytoplasmic" evidence="2">
    <location>
        <begin position="130"/>
        <end position="143"/>
    </location>
</feature>
<feature type="transmembrane region" description="Helical" evidence="2">
    <location>
        <begin position="144"/>
        <end position="164"/>
    </location>
</feature>
<feature type="topological domain" description="Extracellular" evidence="2">
    <location>
        <begin position="165"/>
        <end position="174"/>
    </location>
</feature>
<feature type="transmembrane region" description="Helical" evidence="2">
    <location>
        <begin position="175"/>
        <end position="195"/>
    </location>
</feature>
<feature type="topological domain" description="Cytoplasmic" evidence="2">
    <location>
        <begin position="196"/>
        <end position="299"/>
    </location>
</feature>
<feature type="transmembrane region" description="Helical" evidence="2">
    <location>
        <begin position="300"/>
        <end position="320"/>
    </location>
</feature>
<feature type="topological domain" description="Extracellular" evidence="2">
    <location>
        <begin position="321"/>
        <end position="337"/>
    </location>
</feature>
<feature type="transmembrane region" description="Helical" evidence="2">
    <location>
        <begin position="338"/>
        <end position="358"/>
    </location>
</feature>
<feature type="topological domain" description="Cytoplasmic" evidence="2">
    <location>
        <begin position="359"/>
        <end position="372"/>
    </location>
</feature>
<feature type="transmembrane region" description="Helical" evidence="2">
    <location>
        <begin position="373"/>
        <end position="393"/>
    </location>
</feature>
<feature type="topological domain" description="Extracellular" evidence="2">
    <location>
        <position position="394"/>
    </location>
</feature>
<feature type="transmembrane region" description="Helical" evidence="2">
    <location>
        <begin position="395"/>
        <end position="415"/>
    </location>
</feature>
<feature type="topological domain" description="Cytoplasmic" evidence="2">
    <location>
        <begin position="416"/>
        <end position="425"/>
    </location>
</feature>
<feature type="transmembrane region" description="Helical" evidence="2">
    <location>
        <begin position="426"/>
        <end position="446"/>
    </location>
</feature>
<feature type="topological domain" description="Extracellular" evidence="2">
    <location>
        <begin position="447"/>
        <end position="458"/>
    </location>
</feature>
<feature type="transmembrane region" description="Helical" evidence="2">
    <location>
        <begin position="459"/>
        <end position="479"/>
    </location>
</feature>
<feature type="topological domain" description="Cytoplasmic" evidence="2">
    <location>
        <begin position="480"/>
        <end position="487"/>
    </location>
</feature>
<feature type="region of interest" description="Disordered" evidence="3">
    <location>
        <begin position="206"/>
        <end position="250"/>
    </location>
</feature>
<feature type="compositionally biased region" description="Basic and acidic residues" evidence="3">
    <location>
        <begin position="220"/>
        <end position="237"/>
    </location>
</feature>
<feature type="compositionally biased region" description="Polar residues" evidence="3">
    <location>
        <begin position="238"/>
        <end position="250"/>
    </location>
</feature>
<feature type="splice variant" id="VSP_046456" description="In isoform 4." evidence="5">
    <original>MLKREGKVQPYTKTLDGGWGWMIVIHFFLVNVFVMGMTKTFAIFFVVFQEEFEGTSEQIGWIGSIMSSLRFCAGPLVAIICDILGEKTTSILGAFVVTGGYLISSWATSIPFLCVTMGLL</original>
    <variation>MGMDDCDSFF</variation>
    <location>
        <begin position="1"/>
        <end position="120"/>
    </location>
</feature>
<feature type="splice variant" id="VSP_046242" description="In isoform 2." evidence="5">
    <location>
        <begin position="1"/>
        <end position="34"/>
    </location>
</feature>
<feature type="splice variant" id="VSP_046243" description="In isoform 2." evidence="5">
    <original>TKTFAIFFVVFQEEFEGTSEQIGWIGSIMSSLRFCA</original>
    <variation>DDCDSFFP</variation>
    <location>
        <begin position="38"/>
        <end position="73"/>
    </location>
</feature>
<feature type="splice variant" id="VSP_046457" description="In isoform 5." evidence="5">
    <location>
        <begin position="74"/>
        <end position="121"/>
    </location>
</feature>
<feature type="splice variant" id="VSP_046244" description="In isoform 3." evidence="6">
    <location>
        <begin position="176"/>
        <end position="343"/>
    </location>
</feature>
<feature type="splice variant" id="VSP_046458" description="In isoform 4." evidence="5">
    <original>GWLYDYTQTYNGSFYFSGICYLLSSVSFFFVPLAERWKNSLT</original>
    <variation>EIIPSFQAGYMIIPRHTMALSTSLAYAISSLQFPFFLYHWPKDGKTV</variation>
    <location>
        <begin position="446"/>
        <end position="487"/>
    </location>
</feature>
<feature type="sequence variant" id="VAR_053655" description="In dbSNP:rs35157487.">
    <original>A</original>
    <variation>T</variation>
    <location>
        <position position="185"/>
    </location>
</feature>
<feature type="sequence variant" id="VAR_020309" description="In dbSNP:rs2271885." evidence="4">
    <original>N</original>
    <variation>H</variation>
    <location>
        <position position="264"/>
    </location>
</feature>
<feature type="sequence conflict" description="In Ref. 2; BAF83409." evidence="7" ref="2">
    <original>I</original>
    <variation>V</variation>
    <location>
        <position position="25"/>
    </location>
</feature>
<reference key="1">
    <citation type="journal article" date="1998" name="Biochem. J.">
        <title>Cloning and sequencing of four new mammalian monocarboxylate transporter (MCT) homologues confirms the existence of a transporter family with an ancient past.</title>
        <authorList>
            <person name="Price N.T."/>
            <person name="Jackson V.N."/>
            <person name="Halestrap A.P."/>
        </authorList>
    </citation>
    <scope>NUCLEOTIDE SEQUENCE [MRNA] (ISOFORM 1)</scope>
    <source>
        <tissue>Placenta</tissue>
    </source>
</reference>
<reference key="2">
    <citation type="journal article" date="2004" name="Nat. Genet.">
        <title>Complete sequencing and characterization of 21,243 full-length human cDNAs.</title>
        <authorList>
            <person name="Ota T."/>
            <person name="Suzuki Y."/>
            <person name="Nishikawa T."/>
            <person name="Otsuki T."/>
            <person name="Sugiyama T."/>
            <person name="Irie R."/>
            <person name="Wakamatsu A."/>
            <person name="Hayashi K."/>
            <person name="Sato H."/>
            <person name="Nagai K."/>
            <person name="Kimura K."/>
            <person name="Makita H."/>
            <person name="Sekine M."/>
            <person name="Obayashi M."/>
            <person name="Nishi T."/>
            <person name="Shibahara T."/>
            <person name="Tanaka T."/>
            <person name="Ishii S."/>
            <person name="Yamamoto J."/>
            <person name="Saito K."/>
            <person name="Kawai Y."/>
            <person name="Isono Y."/>
            <person name="Nakamura Y."/>
            <person name="Nagahari K."/>
            <person name="Murakami K."/>
            <person name="Yasuda T."/>
            <person name="Iwayanagi T."/>
            <person name="Wagatsuma M."/>
            <person name="Shiratori A."/>
            <person name="Sudo H."/>
            <person name="Hosoiri T."/>
            <person name="Kaku Y."/>
            <person name="Kodaira H."/>
            <person name="Kondo H."/>
            <person name="Sugawara M."/>
            <person name="Takahashi M."/>
            <person name="Kanda K."/>
            <person name="Yokoi T."/>
            <person name="Furuya T."/>
            <person name="Kikkawa E."/>
            <person name="Omura Y."/>
            <person name="Abe K."/>
            <person name="Kamihara K."/>
            <person name="Katsuta N."/>
            <person name="Sato K."/>
            <person name="Tanikawa M."/>
            <person name="Yamazaki M."/>
            <person name="Ninomiya K."/>
            <person name="Ishibashi T."/>
            <person name="Yamashita H."/>
            <person name="Murakawa K."/>
            <person name="Fujimori K."/>
            <person name="Tanai H."/>
            <person name="Kimata M."/>
            <person name="Watanabe M."/>
            <person name="Hiraoka S."/>
            <person name="Chiba Y."/>
            <person name="Ishida S."/>
            <person name="Ono Y."/>
            <person name="Takiguchi S."/>
            <person name="Watanabe S."/>
            <person name="Yosida M."/>
            <person name="Hotuta T."/>
            <person name="Kusano J."/>
            <person name="Kanehori K."/>
            <person name="Takahashi-Fujii A."/>
            <person name="Hara H."/>
            <person name="Tanase T.-O."/>
            <person name="Nomura Y."/>
            <person name="Togiya S."/>
            <person name="Komai F."/>
            <person name="Hara R."/>
            <person name="Takeuchi K."/>
            <person name="Arita M."/>
            <person name="Imose N."/>
            <person name="Musashino K."/>
            <person name="Yuuki H."/>
            <person name="Oshima A."/>
            <person name="Sasaki N."/>
            <person name="Aotsuka S."/>
            <person name="Yoshikawa Y."/>
            <person name="Matsunawa H."/>
            <person name="Ichihara T."/>
            <person name="Shiohata N."/>
            <person name="Sano S."/>
            <person name="Moriya S."/>
            <person name="Momiyama H."/>
            <person name="Satoh N."/>
            <person name="Takami S."/>
            <person name="Terashima Y."/>
            <person name="Suzuki O."/>
            <person name="Nakagawa S."/>
            <person name="Senoh A."/>
            <person name="Mizoguchi H."/>
            <person name="Goto Y."/>
            <person name="Shimizu F."/>
            <person name="Wakebe H."/>
            <person name="Hishigaki H."/>
            <person name="Watanabe T."/>
            <person name="Sugiyama A."/>
            <person name="Takemoto M."/>
            <person name="Kawakami B."/>
            <person name="Yamazaki M."/>
            <person name="Watanabe K."/>
            <person name="Kumagai A."/>
            <person name="Itakura S."/>
            <person name="Fukuzumi Y."/>
            <person name="Fujimori Y."/>
            <person name="Komiyama M."/>
            <person name="Tashiro H."/>
            <person name="Tanigami A."/>
            <person name="Fujiwara T."/>
            <person name="Ono T."/>
            <person name="Yamada K."/>
            <person name="Fujii Y."/>
            <person name="Ozaki K."/>
            <person name="Hirao M."/>
            <person name="Ohmori Y."/>
            <person name="Kawabata A."/>
            <person name="Hikiji T."/>
            <person name="Kobatake N."/>
            <person name="Inagaki H."/>
            <person name="Ikema Y."/>
            <person name="Okamoto S."/>
            <person name="Okitani R."/>
            <person name="Kawakami T."/>
            <person name="Noguchi S."/>
            <person name="Itoh T."/>
            <person name="Shigeta K."/>
            <person name="Senba T."/>
            <person name="Matsumura K."/>
            <person name="Nakajima Y."/>
            <person name="Mizuno T."/>
            <person name="Morinaga M."/>
            <person name="Sasaki M."/>
            <person name="Togashi T."/>
            <person name="Oyama M."/>
            <person name="Hata H."/>
            <person name="Watanabe M."/>
            <person name="Komatsu T."/>
            <person name="Mizushima-Sugano J."/>
            <person name="Satoh T."/>
            <person name="Shirai Y."/>
            <person name="Takahashi Y."/>
            <person name="Nakagawa K."/>
            <person name="Okumura K."/>
            <person name="Nagase T."/>
            <person name="Nomura N."/>
            <person name="Kikuchi H."/>
            <person name="Masuho Y."/>
            <person name="Yamashita R."/>
            <person name="Nakai K."/>
            <person name="Yada T."/>
            <person name="Nakamura Y."/>
            <person name="Ohara O."/>
            <person name="Isogai T."/>
            <person name="Sugano S."/>
        </authorList>
    </citation>
    <scope>NUCLEOTIDE SEQUENCE [LARGE SCALE MRNA] (ISOFORMS 1; 2; 4 AND 5)</scope>
    <scope>VARIANT HIS-264</scope>
    <source>
        <tissue>Lung</tissue>
        <tissue>Mesangial cell</tissue>
        <tissue>Placenta</tissue>
        <tissue>Substantia nigra</tissue>
    </source>
</reference>
<reference key="3">
    <citation type="journal article" date="2006" name="Nature">
        <title>The DNA sequence and biological annotation of human chromosome 1.</title>
        <authorList>
            <person name="Gregory S.G."/>
            <person name="Barlow K.F."/>
            <person name="McLay K.E."/>
            <person name="Kaul R."/>
            <person name="Swarbreck D."/>
            <person name="Dunham A."/>
            <person name="Scott C.E."/>
            <person name="Howe K.L."/>
            <person name="Woodfine K."/>
            <person name="Spencer C.C.A."/>
            <person name="Jones M.C."/>
            <person name="Gillson C."/>
            <person name="Searle S."/>
            <person name="Zhou Y."/>
            <person name="Kokocinski F."/>
            <person name="McDonald L."/>
            <person name="Evans R."/>
            <person name="Phillips K."/>
            <person name="Atkinson A."/>
            <person name="Cooper R."/>
            <person name="Jones C."/>
            <person name="Hall R.E."/>
            <person name="Andrews T.D."/>
            <person name="Lloyd C."/>
            <person name="Ainscough R."/>
            <person name="Almeida J.P."/>
            <person name="Ambrose K.D."/>
            <person name="Anderson F."/>
            <person name="Andrew R.W."/>
            <person name="Ashwell R.I.S."/>
            <person name="Aubin K."/>
            <person name="Babbage A.K."/>
            <person name="Bagguley C.L."/>
            <person name="Bailey J."/>
            <person name="Beasley H."/>
            <person name="Bethel G."/>
            <person name="Bird C.P."/>
            <person name="Bray-Allen S."/>
            <person name="Brown J.Y."/>
            <person name="Brown A.J."/>
            <person name="Buckley D."/>
            <person name="Burton J."/>
            <person name="Bye J."/>
            <person name="Carder C."/>
            <person name="Chapman J.C."/>
            <person name="Clark S.Y."/>
            <person name="Clarke G."/>
            <person name="Clee C."/>
            <person name="Cobley V."/>
            <person name="Collier R.E."/>
            <person name="Corby N."/>
            <person name="Coville G.J."/>
            <person name="Davies J."/>
            <person name="Deadman R."/>
            <person name="Dunn M."/>
            <person name="Earthrowl M."/>
            <person name="Ellington A.G."/>
            <person name="Errington H."/>
            <person name="Frankish A."/>
            <person name="Frankland J."/>
            <person name="French L."/>
            <person name="Garner P."/>
            <person name="Garnett J."/>
            <person name="Gay L."/>
            <person name="Ghori M.R.J."/>
            <person name="Gibson R."/>
            <person name="Gilby L.M."/>
            <person name="Gillett W."/>
            <person name="Glithero R.J."/>
            <person name="Grafham D.V."/>
            <person name="Griffiths C."/>
            <person name="Griffiths-Jones S."/>
            <person name="Grocock R."/>
            <person name="Hammond S."/>
            <person name="Harrison E.S.I."/>
            <person name="Hart E."/>
            <person name="Haugen E."/>
            <person name="Heath P.D."/>
            <person name="Holmes S."/>
            <person name="Holt K."/>
            <person name="Howden P.J."/>
            <person name="Hunt A.R."/>
            <person name="Hunt S.E."/>
            <person name="Hunter G."/>
            <person name="Isherwood J."/>
            <person name="James R."/>
            <person name="Johnson C."/>
            <person name="Johnson D."/>
            <person name="Joy A."/>
            <person name="Kay M."/>
            <person name="Kershaw J.K."/>
            <person name="Kibukawa M."/>
            <person name="Kimberley A.M."/>
            <person name="King A."/>
            <person name="Knights A.J."/>
            <person name="Lad H."/>
            <person name="Laird G."/>
            <person name="Lawlor S."/>
            <person name="Leongamornlert D.A."/>
            <person name="Lloyd D.M."/>
            <person name="Loveland J."/>
            <person name="Lovell J."/>
            <person name="Lush M.J."/>
            <person name="Lyne R."/>
            <person name="Martin S."/>
            <person name="Mashreghi-Mohammadi M."/>
            <person name="Matthews L."/>
            <person name="Matthews N.S.W."/>
            <person name="McLaren S."/>
            <person name="Milne S."/>
            <person name="Mistry S."/>
            <person name="Moore M.J.F."/>
            <person name="Nickerson T."/>
            <person name="O'Dell C.N."/>
            <person name="Oliver K."/>
            <person name="Palmeiri A."/>
            <person name="Palmer S.A."/>
            <person name="Parker A."/>
            <person name="Patel D."/>
            <person name="Pearce A.V."/>
            <person name="Peck A.I."/>
            <person name="Pelan S."/>
            <person name="Phelps K."/>
            <person name="Phillimore B.J."/>
            <person name="Plumb R."/>
            <person name="Rajan J."/>
            <person name="Raymond C."/>
            <person name="Rouse G."/>
            <person name="Saenphimmachak C."/>
            <person name="Sehra H.K."/>
            <person name="Sheridan E."/>
            <person name="Shownkeen R."/>
            <person name="Sims S."/>
            <person name="Skuce C.D."/>
            <person name="Smith M."/>
            <person name="Steward C."/>
            <person name="Subramanian S."/>
            <person name="Sycamore N."/>
            <person name="Tracey A."/>
            <person name="Tromans A."/>
            <person name="Van Helmond Z."/>
            <person name="Wall M."/>
            <person name="Wallis J.M."/>
            <person name="White S."/>
            <person name="Whitehead S.L."/>
            <person name="Wilkinson J.E."/>
            <person name="Willey D.L."/>
            <person name="Williams H."/>
            <person name="Wilming L."/>
            <person name="Wray P.W."/>
            <person name="Wu Z."/>
            <person name="Coulson A."/>
            <person name="Vaudin M."/>
            <person name="Sulston J.E."/>
            <person name="Durbin R.M."/>
            <person name="Hubbard T."/>
            <person name="Wooster R."/>
            <person name="Dunham I."/>
            <person name="Carter N.P."/>
            <person name="McVean G."/>
            <person name="Ross M.T."/>
            <person name="Harrow J."/>
            <person name="Olson M.V."/>
            <person name="Beck S."/>
            <person name="Rogers J."/>
            <person name="Bentley D.R."/>
        </authorList>
    </citation>
    <scope>NUCLEOTIDE SEQUENCE [LARGE SCALE GENOMIC DNA]</scope>
</reference>
<reference key="4">
    <citation type="submission" date="2005-07" db="EMBL/GenBank/DDBJ databases">
        <authorList>
            <person name="Mural R.J."/>
            <person name="Istrail S."/>
            <person name="Sutton G.G."/>
            <person name="Florea L."/>
            <person name="Halpern A.L."/>
            <person name="Mobarry C.M."/>
            <person name="Lippert R."/>
            <person name="Walenz B."/>
            <person name="Shatkay H."/>
            <person name="Dew I."/>
            <person name="Miller J.R."/>
            <person name="Flanigan M.J."/>
            <person name="Edwards N.J."/>
            <person name="Bolanos R."/>
            <person name="Fasulo D."/>
            <person name="Halldorsson B.V."/>
            <person name="Hannenhalli S."/>
            <person name="Turner R."/>
            <person name="Yooseph S."/>
            <person name="Lu F."/>
            <person name="Nusskern D.R."/>
            <person name="Shue B.C."/>
            <person name="Zheng X.H."/>
            <person name="Zhong F."/>
            <person name="Delcher A.L."/>
            <person name="Huson D.H."/>
            <person name="Kravitz S.A."/>
            <person name="Mouchard L."/>
            <person name="Reinert K."/>
            <person name="Remington K.A."/>
            <person name="Clark A.G."/>
            <person name="Waterman M.S."/>
            <person name="Eichler E.E."/>
            <person name="Adams M.D."/>
            <person name="Hunkapiller M.W."/>
            <person name="Myers E.W."/>
            <person name="Venter J.C."/>
        </authorList>
    </citation>
    <scope>NUCLEOTIDE SEQUENCE [LARGE SCALE GENOMIC DNA]</scope>
</reference>
<reference key="5">
    <citation type="journal article" date="2004" name="Genome Res.">
        <title>The status, quality, and expansion of the NIH full-length cDNA project: the Mammalian Gene Collection (MGC).</title>
        <authorList>
            <consortium name="The MGC Project Team"/>
        </authorList>
    </citation>
    <scope>NUCLEOTIDE SEQUENCE [LARGE SCALE MRNA] (ISOFORM 3)</scope>
    <source>
        <tissue>Brain</tissue>
    </source>
</reference>
<gene>
    <name type="primary">SLC16A4</name>
    <name type="synonym">MCT4</name>
    <name type="synonym">MCT5</name>
</gene>
<name>MOT5_HUMAN</name>